<name>HME2_HUMAN</name>
<dbReference type="EMBL" id="L12701">
    <property type="protein sequence ID" value="AAA53504.2"/>
    <property type="molecule type" value="Genomic_DNA"/>
</dbReference>
<dbReference type="EMBL" id="L12700">
    <property type="protein sequence ID" value="AAA53504.2"/>
    <property type="status" value="JOINED"/>
    <property type="molecule type" value="Genomic_DNA"/>
</dbReference>
<dbReference type="EMBL" id="AC008060">
    <property type="protein sequence ID" value="AAQ96875.1"/>
    <property type="molecule type" value="Genomic_DNA"/>
</dbReference>
<dbReference type="EMBL" id="CH236954">
    <property type="protein sequence ID" value="EAL23909.1"/>
    <property type="molecule type" value="Genomic_DNA"/>
</dbReference>
<dbReference type="EMBL" id="BC104970">
    <property type="protein sequence ID" value="AAI04971.1"/>
    <property type="molecule type" value="mRNA"/>
</dbReference>
<dbReference type="EMBL" id="BC104972">
    <property type="protein sequence ID" value="AAI04973.1"/>
    <property type="molecule type" value="mRNA"/>
</dbReference>
<dbReference type="EMBL" id="J03066">
    <property type="protein sequence ID" value="AAF68670.1"/>
    <property type="molecule type" value="Genomic_DNA"/>
</dbReference>
<dbReference type="CCDS" id="CCDS5940.1"/>
<dbReference type="PIR" id="E48423">
    <property type="entry name" value="E48423"/>
</dbReference>
<dbReference type="RefSeq" id="NP_001418.2">
    <property type="nucleotide sequence ID" value="NM_001427.3"/>
</dbReference>
<dbReference type="BMRB" id="P19622"/>
<dbReference type="SMR" id="P19622"/>
<dbReference type="BioGRID" id="108335">
    <property type="interactions" value="7"/>
</dbReference>
<dbReference type="FunCoup" id="P19622">
    <property type="interactions" value="2001"/>
</dbReference>
<dbReference type="IntAct" id="P19622">
    <property type="interactions" value="2"/>
</dbReference>
<dbReference type="STRING" id="9606.ENSP00000297375"/>
<dbReference type="DrugBank" id="DB03309">
    <property type="generic name" value="N-cyclohexyltaurine"/>
</dbReference>
<dbReference type="GlyGen" id="P19622">
    <property type="glycosylation" value="1 site, 1 O-linked glycan (1 site)"/>
</dbReference>
<dbReference type="iPTMnet" id="P19622"/>
<dbReference type="PhosphoSitePlus" id="P19622"/>
<dbReference type="BioMuta" id="EN2"/>
<dbReference type="DMDM" id="21903415"/>
<dbReference type="jPOST" id="P19622"/>
<dbReference type="MassIVE" id="P19622"/>
<dbReference type="PaxDb" id="9606-ENSP00000297375"/>
<dbReference type="PeptideAtlas" id="P19622"/>
<dbReference type="ProteomicsDB" id="53681"/>
<dbReference type="Pumba" id="P19622"/>
<dbReference type="Antibodypedia" id="18860">
    <property type="antibodies" value="267 antibodies from 29 providers"/>
</dbReference>
<dbReference type="DNASU" id="2020"/>
<dbReference type="Ensembl" id="ENST00000297375.4">
    <property type="protein sequence ID" value="ENSP00000297375.4"/>
    <property type="gene ID" value="ENSG00000164778.4"/>
</dbReference>
<dbReference type="GeneID" id="2020"/>
<dbReference type="KEGG" id="hsa:2020"/>
<dbReference type="MANE-Select" id="ENST00000297375.4">
    <property type="protein sequence ID" value="ENSP00000297375.4"/>
    <property type="RefSeq nucleotide sequence ID" value="NM_001427.4"/>
    <property type="RefSeq protein sequence ID" value="NP_001418.2"/>
</dbReference>
<dbReference type="UCSC" id="uc003wmb.3">
    <property type="organism name" value="human"/>
</dbReference>
<dbReference type="AGR" id="HGNC:3343"/>
<dbReference type="CTD" id="2020"/>
<dbReference type="DisGeNET" id="2020"/>
<dbReference type="GeneCards" id="EN2"/>
<dbReference type="HGNC" id="HGNC:3343">
    <property type="gene designation" value="EN2"/>
</dbReference>
<dbReference type="HPA" id="ENSG00000164778">
    <property type="expression patterns" value="Tissue enriched (brain)"/>
</dbReference>
<dbReference type="MalaCards" id="EN2"/>
<dbReference type="MIM" id="131310">
    <property type="type" value="gene"/>
</dbReference>
<dbReference type="neXtProt" id="NX_P19622"/>
<dbReference type="OpenTargets" id="ENSG00000164778"/>
<dbReference type="PharmGKB" id="PA27780"/>
<dbReference type="VEuPathDB" id="HostDB:ENSG00000164778"/>
<dbReference type="eggNOG" id="KOG0493">
    <property type="taxonomic scope" value="Eukaryota"/>
</dbReference>
<dbReference type="GeneTree" id="ENSGT00940000159935"/>
<dbReference type="HOGENOM" id="CLU_051739_2_0_1"/>
<dbReference type="InParanoid" id="P19622"/>
<dbReference type="OMA" id="GGQPMLW"/>
<dbReference type="OrthoDB" id="6159439at2759"/>
<dbReference type="PAN-GO" id="P19622">
    <property type="GO annotations" value="5 GO annotations based on evolutionary models"/>
</dbReference>
<dbReference type="PhylomeDB" id="P19622"/>
<dbReference type="TreeFam" id="TF106461"/>
<dbReference type="PathwayCommons" id="P19622"/>
<dbReference type="SignaLink" id="P19622"/>
<dbReference type="SIGNOR" id="P19622"/>
<dbReference type="BioGRID-ORCS" id="2020">
    <property type="hits" value="19 hits in 1176 CRISPR screens"/>
</dbReference>
<dbReference type="CD-CODE" id="634B234B">
    <property type="entry name" value="Synthetic Condensate 000180"/>
</dbReference>
<dbReference type="ChiTaRS" id="EN2">
    <property type="organism name" value="human"/>
</dbReference>
<dbReference type="GeneWiki" id="EN2_(gene)"/>
<dbReference type="GenomeRNAi" id="2020"/>
<dbReference type="Pharos" id="P19622">
    <property type="development level" value="Tbio"/>
</dbReference>
<dbReference type="PRO" id="PR:P19622"/>
<dbReference type="Proteomes" id="UP000005640">
    <property type="component" value="Chromosome 7"/>
</dbReference>
<dbReference type="RNAct" id="P19622">
    <property type="molecule type" value="protein"/>
</dbReference>
<dbReference type="Bgee" id="ENSG00000164778">
    <property type="expression patterns" value="Expressed in cerebellar cortex and 47 other cell types or tissues"/>
</dbReference>
<dbReference type="GO" id="GO:0000785">
    <property type="term" value="C:chromatin"/>
    <property type="evidence" value="ECO:0000247"/>
    <property type="project" value="NTNU_SB"/>
</dbReference>
<dbReference type="GO" id="GO:0001650">
    <property type="term" value="C:fibrillar center"/>
    <property type="evidence" value="ECO:0000314"/>
    <property type="project" value="HPA"/>
</dbReference>
<dbReference type="GO" id="GO:0005730">
    <property type="term" value="C:nucleolus"/>
    <property type="evidence" value="ECO:0000314"/>
    <property type="project" value="HPA"/>
</dbReference>
<dbReference type="GO" id="GO:0005654">
    <property type="term" value="C:nucleoplasm"/>
    <property type="evidence" value="ECO:0000314"/>
    <property type="project" value="HPA"/>
</dbReference>
<dbReference type="GO" id="GO:0005634">
    <property type="term" value="C:nucleus"/>
    <property type="evidence" value="ECO:0000318"/>
    <property type="project" value="GO_Central"/>
</dbReference>
<dbReference type="GO" id="GO:0001228">
    <property type="term" value="F:DNA-binding transcription activator activity, RNA polymerase II-specific"/>
    <property type="evidence" value="ECO:0000250"/>
    <property type="project" value="BHF-UCL"/>
</dbReference>
<dbReference type="GO" id="GO:0000981">
    <property type="term" value="F:DNA-binding transcription factor activity, RNA polymerase II-specific"/>
    <property type="evidence" value="ECO:0000247"/>
    <property type="project" value="NTNU_SB"/>
</dbReference>
<dbReference type="GO" id="GO:0000978">
    <property type="term" value="F:RNA polymerase II cis-regulatory region sequence-specific DNA binding"/>
    <property type="evidence" value="ECO:0000250"/>
    <property type="project" value="BHF-UCL"/>
</dbReference>
<dbReference type="GO" id="GO:0061629">
    <property type="term" value="F:RNA polymerase II-specific DNA-binding transcription factor binding"/>
    <property type="evidence" value="ECO:0000250"/>
    <property type="project" value="BHF-UCL"/>
</dbReference>
<dbReference type="GO" id="GO:1990837">
    <property type="term" value="F:sequence-specific double-stranded DNA binding"/>
    <property type="evidence" value="ECO:0000314"/>
    <property type="project" value="ARUK-UCL"/>
</dbReference>
<dbReference type="GO" id="GO:0003714">
    <property type="term" value="F:transcription corepressor activity"/>
    <property type="evidence" value="ECO:0000250"/>
    <property type="project" value="BHF-UCL"/>
</dbReference>
<dbReference type="GO" id="GO:0021953">
    <property type="term" value="P:central nervous system neuron differentiation"/>
    <property type="evidence" value="ECO:0007669"/>
    <property type="project" value="Ensembl"/>
</dbReference>
<dbReference type="GO" id="GO:0071542">
    <property type="term" value="P:dopaminergic neuron differentiation"/>
    <property type="evidence" value="ECO:0007669"/>
    <property type="project" value="Ensembl"/>
</dbReference>
<dbReference type="GO" id="GO:1990403">
    <property type="term" value="P:embryonic brain development"/>
    <property type="evidence" value="ECO:0007669"/>
    <property type="project" value="Ensembl"/>
</dbReference>
<dbReference type="GO" id="GO:0030902">
    <property type="term" value="P:hindbrain development"/>
    <property type="evidence" value="ECO:0007669"/>
    <property type="project" value="Ensembl"/>
</dbReference>
<dbReference type="GO" id="GO:0030901">
    <property type="term" value="P:midbrain development"/>
    <property type="evidence" value="ECO:0007669"/>
    <property type="project" value="Ensembl"/>
</dbReference>
<dbReference type="GO" id="GO:0043524">
    <property type="term" value="P:negative regulation of neuron apoptotic process"/>
    <property type="evidence" value="ECO:0007669"/>
    <property type="project" value="Ensembl"/>
</dbReference>
<dbReference type="GO" id="GO:0000122">
    <property type="term" value="P:negative regulation of transcription by RNA polymerase II"/>
    <property type="evidence" value="ECO:0000250"/>
    <property type="project" value="BHF-UCL"/>
</dbReference>
<dbReference type="GO" id="GO:0048666">
    <property type="term" value="P:neuron development"/>
    <property type="evidence" value="ECO:0007669"/>
    <property type="project" value="Ensembl"/>
</dbReference>
<dbReference type="GO" id="GO:0045944">
    <property type="term" value="P:positive regulation of transcription by RNA polymerase II"/>
    <property type="evidence" value="ECO:0000250"/>
    <property type="project" value="BHF-UCL"/>
</dbReference>
<dbReference type="GO" id="GO:0006357">
    <property type="term" value="P:regulation of transcription by RNA polymerase II"/>
    <property type="evidence" value="ECO:0000318"/>
    <property type="project" value="GO_Central"/>
</dbReference>
<dbReference type="CDD" id="cd00086">
    <property type="entry name" value="homeodomain"/>
    <property type="match status" value="1"/>
</dbReference>
<dbReference type="FunFam" id="1.10.10.60:FF:000167">
    <property type="entry name" value="Homeobox protein engrailed-like"/>
    <property type="match status" value="1"/>
</dbReference>
<dbReference type="Gene3D" id="1.10.10.60">
    <property type="entry name" value="Homeodomain-like"/>
    <property type="match status" value="1"/>
</dbReference>
<dbReference type="InterPro" id="IPR050720">
    <property type="entry name" value="Engrailed_Homeobox_TFs"/>
</dbReference>
<dbReference type="InterPro" id="IPR001356">
    <property type="entry name" value="HD"/>
</dbReference>
<dbReference type="InterPro" id="IPR000747">
    <property type="entry name" value="HD_engrailed"/>
</dbReference>
<dbReference type="InterPro" id="IPR020479">
    <property type="entry name" value="HD_metazoa"/>
</dbReference>
<dbReference type="InterPro" id="IPR019549">
    <property type="entry name" value="Homeobox-engrailed_C-terminal"/>
</dbReference>
<dbReference type="InterPro" id="IPR019737">
    <property type="entry name" value="Homeobox-engrailed_CS"/>
</dbReference>
<dbReference type="InterPro" id="IPR017970">
    <property type="entry name" value="Homeobox_CS"/>
</dbReference>
<dbReference type="InterPro" id="IPR009057">
    <property type="entry name" value="Homeodomain-like_sf"/>
</dbReference>
<dbReference type="PANTHER" id="PTHR24341">
    <property type="entry name" value="HOMEOBOX PROTEIN ENGRAILED"/>
    <property type="match status" value="1"/>
</dbReference>
<dbReference type="PANTHER" id="PTHR24341:SF5">
    <property type="entry name" value="HOMEOBOX PROTEIN ENGRAILED-2"/>
    <property type="match status" value="1"/>
</dbReference>
<dbReference type="Pfam" id="PF10525">
    <property type="entry name" value="Engrail_1_C_sig"/>
    <property type="match status" value="1"/>
</dbReference>
<dbReference type="Pfam" id="PF00046">
    <property type="entry name" value="Homeodomain"/>
    <property type="match status" value="1"/>
</dbReference>
<dbReference type="PRINTS" id="PR00026">
    <property type="entry name" value="ENGRAILED"/>
</dbReference>
<dbReference type="PRINTS" id="PR00024">
    <property type="entry name" value="HOMEOBOX"/>
</dbReference>
<dbReference type="SMART" id="SM00389">
    <property type="entry name" value="HOX"/>
    <property type="match status" value="1"/>
</dbReference>
<dbReference type="SUPFAM" id="SSF46689">
    <property type="entry name" value="Homeodomain-like"/>
    <property type="match status" value="1"/>
</dbReference>
<dbReference type="PROSITE" id="PS00033">
    <property type="entry name" value="ENGRAILED"/>
    <property type="match status" value="1"/>
</dbReference>
<dbReference type="PROSITE" id="PS00027">
    <property type="entry name" value="HOMEOBOX_1"/>
    <property type="match status" value="1"/>
</dbReference>
<dbReference type="PROSITE" id="PS50071">
    <property type="entry name" value="HOMEOBOX_2"/>
    <property type="match status" value="1"/>
</dbReference>
<sequence length="333" mass="34211">MEENDPKPGEAAAAVEGQRQPESSPGGGSGGGGGSSPGEADTGRRRALMLPAVLQAPGNHQHPHRITNFFIDNILRPEFGRRKDAGTCCAGAGGGRGGGAGGEGGASGAEGGGGAGGSEQLLGSGSREPRQNPPCAPGAGGPLPAAGSDSPGDGEGGSKTLSLHGGAKKGGDPGGPLDGSLKARGLGGGDLSVSSDSDSSQAGANLGAQPMLWPAWVYCTRYSDRPSSGPRSRKPKKKNPNKEDKRPRTAFTAEQLQRLKAEFQTNRYLTEQRRQSLAQELSLNESQIKIWFQNKRAKIKKATGNKNTLAVHLMAQGLYNHSTTAKEGKSDSE</sequence>
<reference key="1">
    <citation type="journal article" date="1992" name="Dev. Genet.">
        <title>Cloning and sequence comparison of the mouse, human, and chicken engrailed genes reveal potential functional domains and regulatory regions.</title>
        <authorList>
            <person name="Logan C."/>
            <person name="Hanks M.C."/>
            <person name="Noble-Topham S."/>
            <person name="Nallainathan D."/>
            <person name="Provart N.J."/>
            <person name="Joyner A.L."/>
        </authorList>
    </citation>
    <scope>NUCLEOTIDE SEQUENCE [GENOMIC DNA]</scope>
</reference>
<reference key="2">
    <citation type="submission" date="2000-04" db="EMBL/GenBank/DDBJ databases">
        <authorList>
            <person name="Logan C."/>
            <person name="Hanks M.C."/>
            <person name="Noble-Topham S."/>
            <person name="Nallainathan D."/>
            <person name="Provart N.J."/>
            <person name="Joyner A.L."/>
        </authorList>
    </citation>
    <scope>SEQUENCE REVISION TO 229</scope>
</reference>
<reference key="3">
    <citation type="journal article" date="2003" name="Nature">
        <title>The DNA sequence of human chromosome 7.</title>
        <authorList>
            <person name="Hillier L.W."/>
            <person name="Fulton R.S."/>
            <person name="Fulton L.A."/>
            <person name="Graves T.A."/>
            <person name="Pepin K.H."/>
            <person name="Wagner-McPherson C."/>
            <person name="Layman D."/>
            <person name="Maas J."/>
            <person name="Jaeger S."/>
            <person name="Walker R."/>
            <person name="Wylie K."/>
            <person name="Sekhon M."/>
            <person name="Becker M.C."/>
            <person name="O'Laughlin M.D."/>
            <person name="Schaller M.E."/>
            <person name="Fewell G.A."/>
            <person name="Delehaunty K.D."/>
            <person name="Miner T.L."/>
            <person name="Nash W.E."/>
            <person name="Cordes M."/>
            <person name="Du H."/>
            <person name="Sun H."/>
            <person name="Edwards J."/>
            <person name="Bradshaw-Cordum H."/>
            <person name="Ali J."/>
            <person name="Andrews S."/>
            <person name="Isak A."/>
            <person name="Vanbrunt A."/>
            <person name="Nguyen C."/>
            <person name="Du F."/>
            <person name="Lamar B."/>
            <person name="Courtney L."/>
            <person name="Kalicki J."/>
            <person name="Ozersky P."/>
            <person name="Bielicki L."/>
            <person name="Scott K."/>
            <person name="Holmes A."/>
            <person name="Harkins R."/>
            <person name="Harris A."/>
            <person name="Strong C.M."/>
            <person name="Hou S."/>
            <person name="Tomlinson C."/>
            <person name="Dauphin-Kohlberg S."/>
            <person name="Kozlowicz-Reilly A."/>
            <person name="Leonard S."/>
            <person name="Rohlfing T."/>
            <person name="Rock S.M."/>
            <person name="Tin-Wollam A.-M."/>
            <person name="Abbott A."/>
            <person name="Minx P."/>
            <person name="Maupin R."/>
            <person name="Strowmatt C."/>
            <person name="Latreille P."/>
            <person name="Miller N."/>
            <person name="Johnson D."/>
            <person name="Murray J."/>
            <person name="Woessner J.P."/>
            <person name="Wendl M.C."/>
            <person name="Yang S.-P."/>
            <person name="Schultz B.R."/>
            <person name="Wallis J.W."/>
            <person name="Spieth J."/>
            <person name="Bieri T.A."/>
            <person name="Nelson J.O."/>
            <person name="Berkowicz N."/>
            <person name="Wohldmann P.E."/>
            <person name="Cook L.L."/>
            <person name="Hickenbotham M.T."/>
            <person name="Eldred J."/>
            <person name="Williams D."/>
            <person name="Bedell J.A."/>
            <person name="Mardis E.R."/>
            <person name="Clifton S.W."/>
            <person name="Chissoe S.L."/>
            <person name="Marra M.A."/>
            <person name="Raymond C."/>
            <person name="Haugen E."/>
            <person name="Gillett W."/>
            <person name="Zhou Y."/>
            <person name="James R."/>
            <person name="Phelps K."/>
            <person name="Iadanoto S."/>
            <person name="Bubb K."/>
            <person name="Simms E."/>
            <person name="Levy R."/>
            <person name="Clendenning J."/>
            <person name="Kaul R."/>
            <person name="Kent W.J."/>
            <person name="Furey T.S."/>
            <person name="Baertsch R.A."/>
            <person name="Brent M.R."/>
            <person name="Keibler E."/>
            <person name="Flicek P."/>
            <person name="Bork P."/>
            <person name="Suyama M."/>
            <person name="Bailey J.A."/>
            <person name="Portnoy M.E."/>
            <person name="Torrents D."/>
            <person name="Chinwalla A.T."/>
            <person name="Gish W.R."/>
            <person name="Eddy S.R."/>
            <person name="McPherson J.D."/>
            <person name="Olson M.V."/>
            <person name="Eichler E.E."/>
            <person name="Green E.D."/>
            <person name="Waterston R.H."/>
            <person name="Wilson R.K."/>
        </authorList>
    </citation>
    <scope>NUCLEOTIDE SEQUENCE [LARGE SCALE GENOMIC DNA]</scope>
</reference>
<reference key="4">
    <citation type="journal article" date="2003" name="Science">
        <title>Human chromosome 7: DNA sequence and biology.</title>
        <authorList>
            <person name="Scherer S.W."/>
            <person name="Cheung J."/>
            <person name="MacDonald J.R."/>
            <person name="Osborne L.R."/>
            <person name="Nakabayashi K."/>
            <person name="Herbrick J.-A."/>
            <person name="Carson A.R."/>
            <person name="Parker-Katiraee L."/>
            <person name="Skaug J."/>
            <person name="Khaja R."/>
            <person name="Zhang J."/>
            <person name="Hudek A.K."/>
            <person name="Li M."/>
            <person name="Haddad M."/>
            <person name="Duggan G.E."/>
            <person name="Fernandez B.A."/>
            <person name="Kanematsu E."/>
            <person name="Gentles S."/>
            <person name="Christopoulos C.C."/>
            <person name="Choufani S."/>
            <person name="Kwasnicka D."/>
            <person name="Zheng X.H."/>
            <person name="Lai Z."/>
            <person name="Nusskern D.R."/>
            <person name="Zhang Q."/>
            <person name="Gu Z."/>
            <person name="Lu F."/>
            <person name="Zeesman S."/>
            <person name="Nowaczyk M.J."/>
            <person name="Teshima I."/>
            <person name="Chitayat D."/>
            <person name="Shuman C."/>
            <person name="Weksberg R."/>
            <person name="Zackai E.H."/>
            <person name="Grebe T.A."/>
            <person name="Cox S.R."/>
            <person name="Kirkpatrick S.J."/>
            <person name="Rahman N."/>
            <person name="Friedman J.M."/>
            <person name="Heng H.H.Q."/>
            <person name="Pelicci P.G."/>
            <person name="Lo-Coco F."/>
            <person name="Belloni E."/>
            <person name="Shaffer L.G."/>
            <person name="Pober B."/>
            <person name="Morton C.C."/>
            <person name="Gusella J.F."/>
            <person name="Bruns G.A.P."/>
            <person name="Korf B.R."/>
            <person name="Quade B.J."/>
            <person name="Ligon A.H."/>
            <person name="Ferguson H."/>
            <person name="Higgins A.W."/>
            <person name="Leach N.T."/>
            <person name="Herrick S.R."/>
            <person name="Lemyre E."/>
            <person name="Farra C.G."/>
            <person name="Kim H.-G."/>
            <person name="Summers A.M."/>
            <person name="Gripp K.W."/>
            <person name="Roberts W."/>
            <person name="Szatmari P."/>
            <person name="Winsor E.J.T."/>
            <person name="Grzeschik K.-H."/>
            <person name="Teebi A."/>
            <person name="Minassian B.A."/>
            <person name="Kere J."/>
            <person name="Armengol L."/>
            <person name="Pujana M.A."/>
            <person name="Estivill X."/>
            <person name="Wilson M.D."/>
            <person name="Koop B.F."/>
            <person name="Tosi S."/>
            <person name="Moore G.E."/>
            <person name="Boright A.P."/>
            <person name="Zlotorynski E."/>
            <person name="Kerem B."/>
            <person name="Kroisel P.M."/>
            <person name="Petek E."/>
            <person name="Oscier D.G."/>
            <person name="Mould S.J."/>
            <person name="Doehner H."/>
            <person name="Doehner K."/>
            <person name="Rommens J.M."/>
            <person name="Vincent J.B."/>
            <person name="Venter J.C."/>
            <person name="Li P.W."/>
            <person name="Mural R.J."/>
            <person name="Adams M.D."/>
            <person name="Tsui L.-C."/>
        </authorList>
    </citation>
    <scope>NUCLEOTIDE SEQUENCE [LARGE SCALE GENOMIC DNA]</scope>
</reference>
<reference key="5">
    <citation type="journal article" date="2004" name="Genome Res.">
        <title>The status, quality, and expansion of the NIH full-length cDNA project: the Mammalian Gene Collection (MGC).</title>
        <authorList>
            <consortium name="The MGC Project Team"/>
        </authorList>
    </citation>
    <scope>NUCLEOTIDE SEQUENCE [LARGE SCALE MRNA]</scope>
    <source>
        <tissue>Brain</tissue>
    </source>
</reference>
<reference key="6">
    <citation type="journal article" date="1989" name="Genomics">
        <title>Isolation and chromosomal localization of the human En-2 gene.</title>
        <authorList>
            <person name="Poole S.J."/>
            <person name="Law M.L."/>
            <person name="Kao F.T."/>
            <person name="Lau Y.-F.C."/>
        </authorList>
    </citation>
    <scope>NUCLEOTIDE SEQUENCE [GENOMIC DNA] OF 230-333</scope>
</reference>
<reference key="7">
    <citation type="journal article" date="1994" name="Gene">
        <title>Identification of homeobox genes expressed in human haemopoietic progenitor cells.</title>
        <authorList>
            <person name="Moretti P."/>
            <person name="Simmons P."/>
            <person name="Thomas P."/>
            <person name="Haylock D."/>
            <person name="Rathjen P."/>
            <person name="Vadas M."/>
            <person name="D'Andrea R."/>
        </authorList>
    </citation>
    <scope>NUCLEOTIDE SEQUENCE [MRNA] OF 252-290</scope>
    <source>
        <tissue>Bone marrow</tissue>
    </source>
</reference>
<reference key="8">
    <citation type="journal article" date="2005" name="Am. J. Hum. Genet.">
        <title>Support for the homeobox transcription factor gene ENGRAILED 2 as an autism spectrum disorder susceptibility locus.</title>
        <authorList>
            <person name="Benayed R."/>
            <person name="Gharani N."/>
            <person name="Rossman I."/>
            <person name="Mancuso V."/>
            <person name="Lazar G."/>
            <person name="Kamdar S."/>
            <person name="Bruse S.E."/>
            <person name="Tischfield S."/>
            <person name="Smith B.J."/>
            <person name="Zimmerman R.A."/>
            <person name="DiCicco-Bloom E."/>
            <person name="Brzustowicz L.M."/>
            <person name="Millonig J.H."/>
        </authorList>
    </citation>
    <scope>POSSIBLE INVOLVEMENT IN SUSCEPTIBILITY TO AUTISM</scope>
</reference>
<proteinExistence type="evidence at protein level"/>
<keyword id="KW-1269">Autism</keyword>
<keyword id="KW-1268">Autism spectrum disorder</keyword>
<keyword id="KW-0217">Developmental protein</keyword>
<keyword id="KW-0238">DNA-binding</keyword>
<keyword id="KW-0371">Homeobox</keyword>
<keyword id="KW-0539">Nucleus</keyword>
<keyword id="KW-1267">Proteomics identification</keyword>
<keyword id="KW-1185">Reference proteome</keyword>
<feature type="chain" id="PRO_0000196067" description="Homeobox protein engrailed-2">
    <location>
        <begin position="1"/>
        <end position="333"/>
    </location>
</feature>
<feature type="DNA-binding region" description="Homeobox" evidence="1">
    <location>
        <begin position="244"/>
        <end position="303"/>
    </location>
</feature>
<feature type="region of interest" description="Disordered" evidence="2">
    <location>
        <begin position="1"/>
        <end position="49"/>
    </location>
</feature>
<feature type="region of interest" description="Disordered" evidence="2">
    <location>
        <begin position="95"/>
        <end position="206"/>
    </location>
</feature>
<feature type="region of interest" description="Disordered" evidence="2">
    <location>
        <begin position="223"/>
        <end position="250"/>
    </location>
</feature>
<feature type="compositionally biased region" description="Gly residues" evidence="2">
    <location>
        <begin position="25"/>
        <end position="36"/>
    </location>
</feature>
<feature type="compositionally biased region" description="Gly residues" evidence="2">
    <location>
        <begin position="95"/>
        <end position="117"/>
    </location>
</feature>
<feature type="compositionally biased region" description="Low complexity" evidence="2">
    <location>
        <begin position="142"/>
        <end position="151"/>
    </location>
</feature>
<feature type="compositionally biased region" description="Low complexity" evidence="2">
    <location>
        <begin position="191"/>
        <end position="200"/>
    </location>
</feature>
<feature type="sequence variant" id="VAR_021985" description="In dbSNP:rs3735653.">
    <original>L</original>
    <variation>F</variation>
    <location>
        <position position="121"/>
    </location>
</feature>
<comment type="subcellular location">
    <subcellularLocation>
        <location>Nucleus</location>
    </subcellularLocation>
</comment>
<comment type="disease">
    <text>Genetic variations in EN2 may be associated with susceptibility to autism.</text>
</comment>
<comment type="similarity">
    <text evidence="3">Belongs to the engrailed homeobox family.</text>
</comment>
<accession>P19622</accession>
<accession>A4D252</accession>
<accession>Q549U3</accession>
<accession>Q9UD58</accession>
<organism>
    <name type="scientific">Homo sapiens</name>
    <name type="common">Human</name>
    <dbReference type="NCBI Taxonomy" id="9606"/>
    <lineage>
        <taxon>Eukaryota</taxon>
        <taxon>Metazoa</taxon>
        <taxon>Chordata</taxon>
        <taxon>Craniata</taxon>
        <taxon>Vertebrata</taxon>
        <taxon>Euteleostomi</taxon>
        <taxon>Mammalia</taxon>
        <taxon>Eutheria</taxon>
        <taxon>Euarchontoglires</taxon>
        <taxon>Primates</taxon>
        <taxon>Haplorrhini</taxon>
        <taxon>Catarrhini</taxon>
        <taxon>Hominidae</taxon>
        <taxon>Homo</taxon>
    </lineage>
</organism>
<protein>
    <recommendedName>
        <fullName>Homeobox protein engrailed-2</fullName>
        <shortName>Homeobox protein en-2</shortName>
        <shortName>Hu-En-2</shortName>
    </recommendedName>
</protein>
<evidence type="ECO:0000255" key="1">
    <source>
        <dbReference type="PROSITE-ProRule" id="PRU00108"/>
    </source>
</evidence>
<evidence type="ECO:0000256" key="2">
    <source>
        <dbReference type="SAM" id="MobiDB-lite"/>
    </source>
</evidence>
<evidence type="ECO:0000305" key="3"/>
<gene>
    <name type="primary">EN2</name>
</gene>